<comment type="function">
    <text evidence="1">Catalyzes the transfer of the enolpyruvyl moiety of phosphoenolpyruvate (PEP) to the 5-hydroxyl of shikimate-3-phosphate (S3P) to produce enolpyruvyl shikimate-3-phosphate and inorganic phosphate.</text>
</comment>
<comment type="catalytic activity">
    <reaction evidence="1">
        <text>3-phosphoshikimate + phosphoenolpyruvate = 5-O-(1-carboxyvinyl)-3-phosphoshikimate + phosphate</text>
        <dbReference type="Rhea" id="RHEA:21256"/>
        <dbReference type="ChEBI" id="CHEBI:43474"/>
        <dbReference type="ChEBI" id="CHEBI:57701"/>
        <dbReference type="ChEBI" id="CHEBI:58702"/>
        <dbReference type="ChEBI" id="CHEBI:145989"/>
        <dbReference type="EC" id="2.5.1.19"/>
    </reaction>
    <physiologicalReaction direction="left-to-right" evidence="1">
        <dbReference type="Rhea" id="RHEA:21257"/>
    </physiologicalReaction>
</comment>
<comment type="pathway">
    <text evidence="1">Metabolic intermediate biosynthesis; chorismate biosynthesis; chorismate from D-erythrose 4-phosphate and phosphoenolpyruvate: step 6/7.</text>
</comment>
<comment type="subunit">
    <text evidence="1">Monomer.</text>
</comment>
<comment type="subcellular location">
    <subcellularLocation>
        <location evidence="1">Cytoplasm</location>
    </subcellularLocation>
</comment>
<comment type="similarity">
    <text evidence="1">Belongs to the EPSP synthase family.</text>
</comment>
<accession>A9BHP7</accession>
<evidence type="ECO:0000255" key="1">
    <source>
        <dbReference type="HAMAP-Rule" id="MF_00210"/>
    </source>
</evidence>
<sequence length="432" mass="47371">MKIEVTPTENINAEITLPGDKSISHRALIIGSLAEGETKIHNFLSSEDTLSTLNILNSIGASIKQISEDEVIVEGKGKDNFIEPSNVLNAKNSGTTMRLMMGVLSAQNFYSVITGDDSLRERPMKRVIDPLSKMGGRFFARKNGEFAPITILGTKDISPLVYKTPVASAQVKSAILLAALYAKGETQVIEPAKSRDHTERMLKYFGADIAQKDTTVVIRGLTKNLEGREFFVPGDLSSASFFIVAALITKNSTLLIKNVGINPTRTGILSVLKMMGADIKIINEKTLNNEPVGDLLVKSSSLKGVEIKGEMIPLIIDEIPILAIAATQAKGKTTIKDAKELRYKETDRIRAITRELKKLGIDILEKEDGFDIIGNQKIRGNCTCESYNDHRIAMSLAIAGLIADNPIEIDNFECVNISFPEFTEIFEKIRSI</sequence>
<dbReference type="EC" id="2.5.1.19" evidence="1"/>
<dbReference type="EMBL" id="CP000879">
    <property type="protein sequence ID" value="ABX31919.1"/>
    <property type="molecule type" value="Genomic_DNA"/>
</dbReference>
<dbReference type="RefSeq" id="WP_012209019.1">
    <property type="nucleotide sequence ID" value="NC_010003.1"/>
</dbReference>
<dbReference type="SMR" id="A9BHP7"/>
<dbReference type="STRING" id="403833.Pmob_1202"/>
<dbReference type="KEGG" id="pmo:Pmob_1202"/>
<dbReference type="eggNOG" id="COG0128">
    <property type="taxonomic scope" value="Bacteria"/>
</dbReference>
<dbReference type="HOGENOM" id="CLU_024321_0_1_0"/>
<dbReference type="OrthoDB" id="9809920at2"/>
<dbReference type="UniPathway" id="UPA00053">
    <property type="reaction ID" value="UER00089"/>
</dbReference>
<dbReference type="Proteomes" id="UP000000789">
    <property type="component" value="Chromosome"/>
</dbReference>
<dbReference type="GO" id="GO:0005737">
    <property type="term" value="C:cytoplasm"/>
    <property type="evidence" value="ECO:0007669"/>
    <property type="project" value="UniProtKB-SubCell"/>
</dbReference>
<dbReference type="GO" id="GO:0003866">
    <property type="term" value="F:3-phosphoshikimate 1-carboxyvinyltransferase activity"/>
    <property type="evidence" value="ECO:0007669"/>
    <property type="project" value="UniProtKB-UniRule"/>
</dbReference>
<dbReference type="GO" id="GO:0008652">
    <property type="term" value="P:amino acid biosynthetic process"/>
    <property type="evidence" value="ECO:0007669"/>
    <property type="project" value="UniProtKB-KW"/>
</dbReference>
<dbReference type="GO" id="GO:0009073">
    <property type="term" value="P:aromatic amino acid family biosynthetic process"/>
    <property type="evidence" value="ECO:0007669"/>
    <property type="project" value="UniProtKB-KW"/>
</dbReference>
<dbReference type="GO" id="GO:0009423">
    <property type="term" value="P:chorismate biosynthetic process"/>
    <property type="evidence" value="ECO:0007669"/>
    <property type="project" value="UniProtKB-UniRule"/>
</dbReference>
<dbReference type="CDD" id="cd01556">
    <property type="entry name" value="EPSP_synthase"/>
    <property type="match status" value="1"/>
</dbReference>
<dbReference type="FunFam" id="3.65.10.10:FF:000005">
    <property type="entry name" value="3-phosphoshikimate 1-carboxyvinyltransferase"/>
    <property type="match status" value="1"/>
</dbReference>
<dbReference type="FunFam" id="3.65.10.10:FF:000006">
    <property type="entry name" value="3-phosphoshikimate 1-carboxyvinyltransferase"/>
    <property type="match status" value="1"/>
</dbReference>
<dbReference type="Gene3D" id="3.65.10.10">
    <property type="entry name" value="Enolpyruvate transferase domain"/>
    <property type="match status" value="2"/>
</dbReference>
<dbReference type="HAMAP" id="MF_00210">
    <property type="entry name" value="EPSP_synth"/>
    <property type="match status" value="1"/>
</dbReference>
<dbReference type="InterPro" id="IPR001986">
    <property type="entry name" value="Enolpyruvate_Tfrase_dom"/>
</dbReference>
<dbReference type="InterPro" id="IPR036968">
    <property type="entry name" value="Enolpyruvate_Tfrase_sf"/>
</dbReference>
<dbReference type="InterPro" id="IPR006264">
    <property type="entry name" value="EPSP_synthase"/>
</dbReference>
<dbReference type="InterPro" id="IPR023193">
    <property type="entry name" value="EPSP_synthase_CS"/>
</dbReference>
<dbReference type="InterPro" id="IPR013792">
    <property type="entry name" value="RNA3'P_cycl/enolpyr_Trfase_a/b"/>
</dbReference>
<dbReference type="NCBIfam" id="TIGR01356">
    <property type="entry name" value="aroA"/>
    <property type="match status" value="1"/>
</dbReference>
<dbReference type="PANTHER" id="PTHR21090">
    <property type="entry name" value="AROM/DEHYDROQUINATE SYNTHASE"/>
    <property type="match status" value="1"/>
</dbReference>
<dbReference type="PANTHER" id="PTHR21090:SF5">
    <property type="entry name" value="PENTAFUNCTIONAL AROM POLYPEPTIDE"/>
    <property type="match status" value="1"/>
</dbReference>
<dbReference type="Pfam" id="PF00275">
    <property type="entry name" value="EPSP_synthase"/>
    <property type="match status" value="1"/>
</dbReference>
<dbReference type="PIRSF" id="PIRSF000505">
    <property type="entry name" value="EPSPS"/>
    <property type="match status" value="1"/>
</dbReference>
<dbReference type="SUPFAM" id="SSF55205">
    <property type="entry name" value="EPT/RTPC-like"/>
    <property type="match status" value="1"/>
</dbReference>
<dbReference type="PROSITE" id="PS00104">
    <property type="entry name" value="EPSP_SYNTHASE_1"/>
    <property type="match status" value="1"/>
</dbReference>
<dbReference type="PROSITE" id="PS00885">
    <property type="entry name" value="EPSP_SYNTHASE_2"/>
    <property type="match status" value="1"/>
</dbReference>
<name>AROA_PETMO</name>
<proteinExistence type="inferred from homology"/>
<feature type="chain" id="PRO_1000077993" description="3-phosphoshikimate 1-carboxyvinyltransferase">
    <location>
        <begin position="1"/>
        <end position="432"/>
    </location>
</feature>
<feature type="active site" description="Proton acceptor" evidence="1">
    <location>
        <position position="317"/>
    </location>
</feature>
<feature type="binding site" evidence="1">
    <location>
        <position position="21"/>
    </location>
    <ligand>
        <name>3-phosphoshikimate</name>
        <dbReference type="ChEBI" id="CHEBI:145989"/>
    </ligand>
</feature>
<feature type="binding site" evidence="1">
    <location>
        <position position="21"/>
    </location>
    <ligand>
        <name>phosphoenolpyruvate</name>
        <dbReference type="ChEBI" id="CHEBI:58702"/>
    </ligand>
</feature>
<feature type="binding site" evidence="1">
    <location>
        <position position="22"/>
    </location>
    <ligand>
        <name>3-phosphoshikimate</name>
        <dbReference type="ChEBI" id="CHEBI:145989"/>
    </ligand>
</feature>
<feature type="binding site" evidence="1">
    <location>
        <position position="26"/>
    </location>
    <ligand>
        <name>3-phosphoshikimate</name>
        <dbReference type="ChEBI" id="CHEBI:145989"/>
    </ligand>
</feature>
<feature type="binding site" evidence="1">
    <location>
        <position position="94"/>
    </location>
    <ligand>
        <name>phosphoenolpyruvate</name>
        <dbReference type="ChEBI" id="CHEBI:58702"/>
    </ligand>
</feature>
<feature type="binding site" evidence="1">
    <location>
        <position position="122"/>
    </location>
    <ligand>
        <name>phosphoenolpyruvate</name>
        <dbReference type="ChEBI" id="CHEBI:58702"/>
    </ligand>
</feature>
<feature type="binding site" evidence="1">
    <location>
        <position position="168"/>
    </location>
    <ligand>
        <name>3-phosphoshikimate</name>
        <dbReference type="ChEBI" id="CHEBI:145989"/>
    </ligand>
</feature>
<feature type="binding site" evidence="1">
    <location>
        <position position="170"/>
    </location>
    <ligand>
        <name>3-phosphoshikimate</name>
        <dbReference type="ChEBI" id="CHEBI:145989"/>
    </ligand>
</feature>
<feature type="binding site" evidence="1">
    <location>
        <position position="170"/>
    </location>
    <ligand>
        <name>phosphoenolpyruvate</name>
        <dbReference type="ChEBI" id="CHEBI:58702"/>
    </ligand>
</feature>
<feature type="binding site" evidence="1">
    <location>
        <position position="317"/>
    </location>
    <ligand>
        <name>3-phosphoshikimate</name>
        <dbReference type="ChEBI" id="CHEBI:145989"/>
    </ligand>
</feature>
<feature type="binding site" evidence="1">
    <location>
        <position position="344"/>
    </location>
    <ligand>
        <name>3-phosphoshikimate</name>
        <dbReference type="ChEBI" id="CHEBI:145989"/>
    </ligand>
</feature>
<feature type="binding site" evidence="1">
    <location>
        <position position="348"/>
    </location>
    <ligand>
        <name>phosphoenolpyruvate</name>
        <dbReference type="ChEBI" id="CHEBI:58702"/>
    </ligand>
</feature>
<feature type="binding site" evidence="1">
    <location>
        <position position="391"/>
    </location>
    <ligand>
        <name>phosphoenolpyruvate</name>
        <dbReference type="ChEBI" id="CHEBI:58702"/>
    </ligand>
</feature>
<organism>
    <name type="scientific">Petrotoga mobilis (strain DSM 10674 / SJ95)</name>
    <dbReference type="NCBI Taxonomy" id="403833"/>
    <lineage>
        <taxon>Bacteria</taxon>
        <taxon>Thermotogati</taxon>
        <taxon>Thermotogota</taxon>
        <taxon>Thermotogae</taxon>
        <taxon>Petrotogales</taxon>
        <taxon>Petrotogaceae</taxon>
        <taxon>Petrotoga</taxon>
    </lineage>
</organism>
<protein>
    <recommendedName>
        <fullName evidence="1">3-phosphoshikimate 1-carboxyvinyltransferase</fullName>
        <ecNumber evidence="1">2.5.1.19</ecNumber>
    </recommendedName>
    <alternativeName>
        <fullName evidence="1">5-enolpyruvylshikimate-3-phosphate synthase</fullName>
        <shortName evidence="1">EPSP synthase</shortName>
        <shortName evidence="1">EPSPS</shortName>
    </alternativeName>
</protein>
<gene>
    <name evidence="1" type="primary">aroA</name>
    <name type="ordered locus">Pmob_1202</name>
</gene>
<keyword id="KW-0028">Amino-acid biosynthesis</keyword>
<keyword id="KW-0057">Aromatic amino acid biosynthesis</keyword>
<keyword id="KW-0963">Cytoplasm</keyword>
<keyword id="KW-0808">Transferase</keyword>
<reference key="1">
    <citation type="submission" date="2007-11" db="EMBL/GenBank/DDBJ databases">
        <title>Complete sequence of Petroga mobilis SJ95.</title>
        <authorList>
            <consortium name="US DOE Joint Genome Institute"/>
            <person name="Copeland A."/>
            <person name="Lucas S."/>
            <person name="Lapidus A."/>
            <person name="Barry K."/>
            <person name="Glavina del Rio T."/>
            <person name="Dalin E."/>
            <person name="Tice H."/>
            <person name="Pitluck S."/>
            <person name="Meincke L."/>
            <person name="Brettin T."/>
            <person name="Bruce D."/>
            <person name="Detter J.C."/>
            <person name="Han C."/>
            <person name="Kuske C.R."/>
            <person name="Schmutz J."/>
            <person name="Larimer F."/>
            <person name="Land M."/>
            <person name="Hauser L."/>
            <person name="Kyrpides N."/>
            <person name="Mikhailova N."/>
            <person name="Noll K."/>
            <person name="Richardson P."/>
        </authorList>
    </citation>
    <scope>NUCLEOTIDE SEQUENCE [LARGE SCALE GENOMIC DNA]</scope>
    <source>
        <strain>DSM 10674 / SJ95</strain>
    </source>
</reference>